<dbReference type="EC" id="2.1.1.61" evidence="1"/>
<dbReference type="EC" id="1.5.-.-" evidence="1"/>
<dbReference type="EMBL" id="CP000822">
    <property type="protein sequence ID" value="ABV11617.1"/>
    <property type="status" value="ALT_INIT"/>
    <property type="molecule type" value="Genomic_DNA"/>
</dbReference>
<dbReference type="RefSeq" id="WP_024130149.1">
    <property type="nucleotide sequence ID" value="NC_009792.1"/>
</dbReference>
<dbReference type="SMR" id="A8ADQ4"/>
<dbReference type="STRING" id="290338.CKO_00461"/>
<dbReference type="GeneID" id="45134708"/>
<dbReference type="KEGG" id="cko:CKO_00461"/>
<dbReference type="HOGENOM" id="CLU_022427_1_0_6"/>
<dbReference type="OrthoDB" id="9786494at2"/>
<dbReference type="Proteomes" id="UP000008148">
    <property type="component" value="Chromosome"/>
</dbReference>
<dbReference type="GO" id="GO:0005737">
    <property type="term" value="C:cytoplasm"/>
    <property type="evidence" value="ECO:0007669"/>
    <property type="project" value="UniProtKB-SubCell"/>
</dbReference>
<dbReference type="GO" id="GO:0050660">
    <property type="term" value="F:flavin adenine dinucleotide binding"/>
    <property type="evidence" value="ECO:0007669"/>
    <property type="project" value="UniProtKB-UniRule"/>
</dbReference>
<dbReference type="GO" id="GO:0016645">
    <property type="term" value="F:oxidoreductase activity, acting on the CH-NH group of donors"/>
    <property type="evidence" value="ECO:0007669"/>
    <property type="project" value="InterPro"/>
</dbReference>
<dbReference type="GO" id="GO:0004808">
    <property type="term" value="F:tRNA (5-methylaminomethyl-2-thiouridylate)(34)-methyltransferase activity"/>
    <property type="evidence" value="ECO:0007669"/>
    <property type="project" value="UniProtKB-EC"/>
</dbReference>
<dbReference type="GO" id="GO:0032259">
    <property type="term" value="P:methylation"/>
    <property type="evidence" value="ECO:0007669"/>
    <property type="project" value="UniProtKB-KW"/>
</dbReference>
<dbReference type="GO" id="GO:0002098">
    <property type="term" value="P:tRNA wobble uridine modification"/>
    <property type="evidence" value="ECO:0007669"/>
    <property type="project" value="TreeGrafter"/>
</dbReference>
<dbReference type="FunFam" id="3.40.50.150:FF:000107">
    <property type="entry name" value="tRNA 5-methylaminomethyl-2-thiouridine biosynthesis bifunctional protein MnmC"/>
    <property type="match status" value="1"/>
</dbReference>
<dbReference type="Gene3D" id="3.30.9.10">
    <property type="entry name" value="D-Amino Acid Oxidase, subunit A, domain 2"/>
    <property type="match status" value="1"/>
</dbReference>
<dbReference type="Gene3D" id="3.50.50.60">
    <property type="entry name" value="FAD/NAD(P)-binding domain"/>
    <property type="match status" value="1"/>
</dbReference>
<dbReference type="Gene3D" id="3.40.50.150">
    <property type="entry name" value="Vaccinia Virus protein VP39"/>
    <property type="match status" value="1"/>
</dbReference>
<dbReference type="HAMAP" id="MF_01102">
    <property type="entry name" value="MnmC"/>
    <property type="match status" value="1"/>
</dbReference>
<dbReference type="InterPro" id="IPR006076">
    <property type="entry name" value="FAD-dep_OxRdtase"/>
</dbReference>
<dbReference type="InterPro" id="IPR036188">
    <property type="entry name" value="FAD/NAD-bd_sf"/>
</dbReference>
<dbReference type="InterPro" id="IPR008471">
    <property type="entry name" value="MnmC-like_methylTransf"/>
</dbReference>
<dbReference type="InterPro" id="IPR029063">
    <property type="entry name" value="SAM-dependent_MTases_sf"/>
</dbReference>
<dbReference type="InterPro" id="IPR023032">
    <property type="entry name" value="tRNA_MAMT_biosynth_bifunc_MnmC"/>
</dbReference>
<dbReference type="InterPro" id="IPR047785">
    <property type="entry name" value="tRNA_MNMC2"/>
</dbReference>
<dbReference type="InterPro" id="IPR017610">
    <property type="entry name" value="tRNA_S-uridine_synth_MnmC_C"/>
</dbReference>
<dbReference type="NCBIfam" id="TIGR03197">
    <property type="entry name" value="MnmC_Cterm"/>
    <property type="match status" value="1"/>
</dbReference>
<dbReference type="NCBIfam" id="NF002480">
    <property type="entry name" value="PRK01747.1-1"/>
    <property type="match status" value="1"/>
</dbReference>
<dbReference type="NCBIfam" id="NF002481">
    <property type="entry name" value="PRK01747.1-2"/>
    <property type="match status" value="1"/>
</dbReference>
<dbReference type="NCBIfam" id="NF002482">
    <property type="entry name" value="PRK01747.1-3"/>
    <property type="match status" value="1"/>
</dbReference>
<dbReference type="NCBIfam" id="NF002484">
    <property type="entry name" value="PRK01747.1-5"/>
    <property type="match status" value="1"/>
</dbReference>
<dbReference type="NCBIfam" id="NF033855">
    <property type="entry name" value="tRNA_MNMC2"/>
    <property type="match status" value="1"/>
</dbReference>
<dbReference type="PANTHER" id="PTHR13847">
    <property type="entry name" value="SARCOSINE DEHYDROGENASE-RELATED"/>
    <property type="match status" value="1"/>
</dbReference>
<dbReference type="PANTHER" id="PTHR13847:SF283">
    <property type="entry name" value="TRNA 5-METHYLAMINOMETHYL-2-THIOURIDINE BIOSYNTHESIS BIFUNCTIONAL PROTEIN MNMC"/>
    <property type="match status" value="1"/>
</dbReference>
<dbReference type="Pfam" id="PF01266">
    <property type="entry name" value="DAO"/>
    <property type="match status" value="1"/>
</dbReference>
<dbReference type="Pfam" id="PF05430">
    <property type="entry name" value="Methyltransf_30"/>
    <property type="match status" value="1"/>
</dbReference>
<dbReference type="SUPFAM" id="SSF51905">
    <property type="entry name" value="FAD/NAD(P)-binding domain"/>
    <property type="match status" value="1"/>
</dbReference>
<name>MNMC_CITK8</name>
<proteinExistence type="inferred from homology"/>
<organism>
    <name type="scientific">Citrobacter koseri (strain ATCC BAA-895 / CDC 4225-83 / SGSC4696)</name>
    <dbReference type="NCBI Taxonomy" id="290338"/>
    <lineage>
        <taxon>Bacteria</taxon>
        <taxon>Pseudomonadati</taxon>
        <taxon>Pseudomonadota</taxon>
        <taxon>Gammaproteobacteria</taxon>
        <taxon>Enterobacterales</taxon>
        <taxon>Enterobacteriaceae</taxon>
        <taxon>Citrobacter</taxon>
    </lineage>
</organism>
<gene>
    <name evidence="1" type="primary">mnmC</name>
    <name type="ordered locus">CKO_00461</name>
</gene>
<feature type="chain" id="PRO_0000347976" description="tRNA 5-methylaminomethyl-2-thiouridine biosynthesis bifunctional protein MnmC">
    <location>
        <begin position="1"/>
        <end position="666"/>
    </location>
</feature>
<feature type="region of interest" description="tRNA (mnm(5)s(2)U34)-methyltransferase">
    <location>
        <begin position="1"/>
        <end position="245"/>
    </location>
</feature>
<feature type="region of interest" description="FAD-dependent cmnm(5)s(2)U34 oxidoreductase">
    <location>
        <begin position="270"/>
        <end position="666"/>
    </location>
</feature>
<evidence type="ECO:0000255" key="1">
    <source>
        <dbReference type="HAMAP-Rule" id="MF_01102"/>
    </source>
</evidence>
<evidence type="ECO:0000305" key="2"/>
<reference key="1">
    <citation type="submission" date="2007-08" db="EMBL/GenBank/DDBJ databases">
        <authorList>
            <consortium name="The Citrobacter koseri Genome Sequencing Project"/>
            <person name="McClelland M."/>
            <person name="Sanderson E.K."/>
            <person name="Porwollik S."/>
            <person name="Spieth J."/>
            <person name="Clifton W.S."/>
            <person name="Latreille P."/>
            <person name="Courtney L."/>
            <person name="Wang C."/>
            <person name="Pepin K."/>
            <person name="Bhonagiri V."/>
            <person name="Nash W."/>
            <person name="Johnson M."/>
            <person name="Thiruvilangam P."/>
            <person name="Wilson R."/>
        </authorList>
    </citation>
    <scope>NUCLEOTIDE SEQUENCE [LARGE SCALE GENOMIC DNA]</scope>
    <source>
        <strain>ATCC BAA-895 / CDC 4225-83 / SGSC4696</strain>
    </source>
</reference>
<keyword id="KW-0963">Cytoplasm</keyword>
<keyword id="KW-0274">FAD</keyword>
<keyword id="KW-0285">Flavoprotein</keyword>
<keyword id="KW-0489">Methyltransferase</keyword>
<keyword id="KW-0511">Multifunctional enzyme</keyword>
<keyword id="KW-0560">Oxidoreductase</keyword>
<keyword id="KW-1185">Reference proteome</keyword>
<keyword id="KW-0949">S-adenosyl-L-methionine</keyword>
<keyword id="KW-0808">Transferase</keyword>
<keyword id="KW-0819">tRNA processing</keyword>
<accession>A8ADQ4</accession>
<protein>
    <recommendedName>
        <fullName evidence="1">tRNA 5-methylaminomethyl-2-thiouridine biosynthesis bifunctional protein MnmC</fullName>
        <shortName evidence="1">tRNA mnm(5)s(2)U biosynthesis bifunctional protein</shortName>
    </recommendedName>
    <domain>
        <recommendedName>
            <fullName evidence="1">tRNA (mnm(5)s(2)U34)-methyltransferase</fullName>
            <ecNumber evidence="1">2.1.1.61</ecNumber>
        </recommendedName>
    </domain>
    <domain>
        <recommendedName>
            <fullName evidence="1">FAD-dependent cmnm(5)s(2)U34 oxidoreductase</fullName>
            <ecNumber evidence="1">1.5.-.-</ecNumber>
        </recommendedName>
    </domain>
</protein>
<sequence>MKQYAIQPANLEFNAEGTPVSRDFDDVYFSNDNGLEETRYVFLGGNQLEERFPLHPRPLFVVAESGFGTGLNFLTLWQAFSQFRDAHPEATLQRLHFISFEKFPLTQADLALAHQHWPELAPWAQQLHAQWPLPLAGCHRLILDDGRVTLDLWFGDINELTGKLDESLNQKVDAWFLDGFAPAKNPDMWTQNLFSTMARLARPGGTLATFTSAGFVRRGLQEAGFTMQKRKGFGRKREMLCGVMAHALTFPSPTPWFTRSGSAKRDVAIIGGGIASALLSLALLRRGWQVTLYCSDEQPAQGASGNRQGALYPLLSKHDAAINLFFPSAFTFARRLYDALPVTFDHDWCGVTQLGWDEKSQHKIDQMLSLALPDALAVAVDPDQAQQETGVATHCRGITYPAGGWLCPAQLTAALLALAATQGLRRHYTHTLTALSRQATGWQLQFAEGKAVEHEVVVLANGHQINHVDQTRPLPVYSVAGQVSHIPTTPALSALRQVLCYDGYLTPQNPATHQHCIGASYHRGSEETAYREDDQQQNRQRLIDCFPDAAWAKEVDISEKAARCGVRCATRDHLPMVGNVPDYDATLAQYAALARQKDAAERAPVYPDLFMLGALGSRGLCSAPLCAEILAAQMSEEPIPMDADTLAALNPNRLWVRKLLKGKAVK</sequence>
<comment type="function">
    <text evidence="1">Catalyzes the last two steps in the biosynthesis of 5-methylaminomethyl-2-thiouridine (mnm(5)s(2)U) at the wobble position (U34) in tRNA. Catalyzes the FAD-dependent demodification of cmnm(5)s(2)U34 to nm(5)s(2)U34, followed by the transfer of a methyl group from S-adenosyl-L-methionine to nm(5)s(2)U34, to form mnm(5)s(2)U34.</text>
</comment>
<comment type="catalytic activity">
    <reaction evidence="1">
        <text>5-aminomethyl-2-thiouridine(34) in tRNA + S-adenosyl-L-methionine = 5-methylaminomethyl-2-thiouridine(34) in tRNA + S-adenosyl-L-homocysteine + H(+)</text>
        <dbReference type="Rhea" id="RHEA:19569"/>
        <dbReference type="Rhea" id="RHEA-COMP:10195"/>
        <dbReference type="Rhea" id="RHEA-COMP:10197"/>
        <dbReference type="ChEBI" id="CHEBI:15378"/>
        <dbReference type="ChEBI" id="CHEBI:57856"/>
        <dbReference type="ChEBI" id="CHEBI:59789"/>
        <dbReference type="ChEBI" id="CHEBI:74454"/>
        <dbReference type="ChEBI" id="CHEBI:74455"/>
        <dbReference type="EC" id="2.1.1.61"/>
    </reaction>
</comment>
<comment type="cofactor">
    <cofactor evidence="1">
        <name>FAD</name>
        <dbReference type="ChEBI" id="CHEBI:57692"/>
    </cofactor>
</comment>
<comment type="subcellular location">
    <subcellularLocation>
        <location evidence="1">Cytoplasm</location>
    </subcellularLocation>
</comment>
<comment type="similarity">
    <text evidence="1">In the N-terminal section; belongs to the methyltransferase superfamily. tRNA (mnm(5)s(2)U34)-methyltransferase family.</text>
</comment>
<comment type="similarity">
    <text evidence="1">In the C-terminal section; belongs to the DAO family.</text>
</comment>
<comment type="sequence caution" evidence="2">
    <conflict type="erroneous initiation">
        <sequence resource="EMBL-CDS" id="ABV11617"/>
    </conflict>
</comment>